<keyword id="KW-0963">Cytoplasm</keyword>
<keyword id="KW-0227">DNA damage</keyword>
<keyword id="KW-0233">DNA recombination</keyword>
<keyword id="KW-0234">DNA repair</keyword>
<keyword id="KW-0238">DNA-binding</keyword>
<comment type="function">
    <text evidence="1">The RuvA-RuvB-RuvC complex processes Holliday junction (HJ) DNA during genetic recombination and DNA repair, while the RuvA-RuvB complex plays an important role in the rescue of blocked DNA replication forks via replication fork reversal (RFR). RuvA specifically binds to HJ cruciform DNA, conferring on it an open structure. The RuvB hexamer acts as an ATP-dependent pump, pulling dsDNA into and through the RuvAB complex. HJ branch migration allows RuvC to scan DNA until it finds its consensus sequence, where it cleaves and resolves the cruciform DNA.</text>
</comment>
<comment type="subunit">
    <text evidence="1">Homotetramer. Forms an RuvA(8)-RuvB(12)-Holliday junction (HJ) complex. HJ DNA is sandwiched between 2 RuvA tetramers; dsDNA enters through RuvA and exits via RuvB. An RuvB hexamer assembles on each DNA strand where it exits the tetramer. Each RuvB hexamer is contacted by two RuvA subunits (via domain III) on 2 adjacent RuvB subunits; this complex drives branch migration. In the full resolvosome a probable DNA-RuvA(4)-RuvB(12)-RuvC(2) complex forms which resolves the HJ.</text>
</comment>
<comment type="subcellular location">
    <subcellularLocation>
        <location evidence="1">Cytoplasm</location>
    </subcellularLocation>
</comment>
<comment type="domain">
    <text evidence="1">Has three domains with a flexible linker between the domains II and III and assumes an 'L' shape. Domain III is highly mobile and contacts RuvB.</text>
</comment>
<comment type="similarity">
    <text evidence="1">Belongs to the RuvA family.</text>
</comment>
<proteinExistence type="inferred from homology"/>
<accession>A9AZL0</accession>
<feature type="chain" id="PRO_1000090324" description="Holliday junction branch migration complex subunit RuvA">
    <location>
        <begin position="1"/>
        <end position="197"/>
    </location>
</feature>
<feature type="region of interest" description="Domain I" evidence="1">
    <location>
        <begin position="1"/>
        <end position="64"/>
    </location>
</feature>
<feature type="region of interest" description="Domain II" evidence="1">
    <location>
        <begin position="65"/>
        <end position="143"/>
    </location>
</feature>
<feature type="region of interest" description="Flexible linker" evidence="1">
    <location>
        <begin position="144"/>
        <end position="153"/>
    </location>
</feature>
<feature type="region of interest" description="Domain III" evidence="1">
    <location>
        <begin position="153"/>
        <end position="197"/>
    </location>
</feature>
<gene>
    <name evidence="1" type="primary">ruvA</name>
    <name type="ordered locus">Haur_2516</name>
</gene>
<sequence length="197" mass="20583">MIASVRGVVQLIGQDQVVIDVHGVGLAIAVPRTVLATIGAIGDTAQLYTHLHVREDMLALFGFSSPAQRALFELLLGVSGIGPKVALALLSAATPEELQHAIAREDITMLSKVPGIGKKTAARLVLELKGKFGVATISPQLSTNPGLLALNTELIDILTSLGYSTTEAQAALNALPADAPADTEERLRLALQYFGGV</sequence>
<name>RUVA_HERA2</name>
<protein>
    <recommendedName>
        <fullName evidence="1">Holliday junction branch migration complex subunit RuvA</fullName>
    </recommendedName>
</protein>
<dbReference type="EMBL" id="CP000875">
    <property type="protein sequence ID" value="ABX05154.1"/>
    <property type="molecule type" value="Genomic_DNA"/>
</dbReference>
<dbReference type="SMR" id="A9AZL0"/>
<dbReference type="FunCoup" id="A9AZL0">
    <property type="interactions" value="367"/>
</dbReference>
<dbReference type="STRING" id="316274.Haur_2516"/>
<dbReference type="KEGG" id="hau:Haur_2516"/>
<dbReference type="eggNOG" id="COG0632">
    <property type="taxonomic scope" value="Bacteria"/>
</dbReference>
<dbReference type="HOGENOM" id="CLU_087936_2_1_0"/>
<dbReference type="InParanoid" id="A9AZL0"/>
<dbReference type="Proteomes" id="UP000000787">
    <property type="component" value="Chromosome"/>
</dbReference>
<dbReference type="GO" id="GO:0005737">
    <property type="term" value="C:cytoplasm"/>
    <property type="evidence" value="ECO:0007669"/>
    <property type="project" value="UniProtKB-SubCell"/>
</dbReference>
<dbReference type="GO" id="GO:0009379">
    <property type="term" value="C:Holliday junction helicase complex"/>
    <property type="evidence" value="ECO:0007669"/>
    <property type="project" value="InterPro"/>
</dbReference>
<dbReference type="GO" id="GO:0048476">
    <property type="term" value="C:Holliday junction resolvase complex"/>
    <property type="evidence" value="ECO:0007669"/>
    <property type="project" value="UniProtKB-UniRule"/>
</dbReference>
<dbReference type="GO" id="GO:0005524">
    <property type="term" value="F:ATP binding"/>
    <property type="evidence" value="ECO:0007669"/>
    <property type="project" value="InterPro"/>
</dbReference>
<dbReference type="GO" id="GO:0000400">
    <property type="term" value="F:four-way junction DNA binding"/>
    <property type="evidence" value="ECO:0007669"/>
    <property type="project" value="UniProtKB-UniRule"/>
</dbReference>
<dbReference type="GO" id="GO:0009378">
    <property type="term" value="F:four-way junction helicase activity"/>
    <property type="evidence" value="ECO:0007669"/>
    <property type="project" value="InterPro"/>
</dbReference>
<dbReference type="GO" id="GO:0006310">
    <property type="term" value="P:DNA recombination"/>
    <property type="evidence" value="ECO:0007669"/>
    <property type="project" value="UniProtKB-UniRule"/>
</dbReference>
<dbReference type="GO" id="GO:0006281">
    <property type="term" value="P:DNA repair"/>
    <property type="evidence" value="ECO:0007669"/>
    <property type="project" value="UniProtKB-UniRule"/>
</dbReference>
<dbReference type="CDD" id="cd14332">
    <property type="entry name" value="UBA_RuvA_C"/>
    <property type="match status" value="1"/>
</dbReference>
<dbReference type="Gene3D" id="1.10.150.20">
    <property type="entry name" value="5' to 3' exonuclease, C-terminal subdomain"/>
    <property type="match status" value="1"/>
</dbReference>
<dbReference type="Gene3D" id="1.10.8.10">
    <property type="entry name" value="DNA helicase RuvA subunit, C-terminal domain"/>
    <property type="match status" value="1"/>
</dbReference>
<dbReference type="Gene3D" id="2.40.50.140">
    <property type="entry name" value="Nucleic acid-binding proteins"/>
    <property type="match status" value="1"/>
</dbReference>
<dbReference type="HAMAP" id="MF_00031">
    <property type="entry name" value="DNA_HJ_migration_RuvA"/>
    <property type="match status" value="1"/>
</dbReference>
<dbReference type="InterPro" id="IPR013849">
    <property type="entry name" value="DNA_helicase_Holl-junc_RuvA_I"/>
</dbReference>
<dbReference type="InterPro" id="IPR003583">
    <property type="entry name" value="Hlx-hairpin-Hlx_DNA-bd_motif"/>
</dbReference>
<dbReference type="InterPro" id="IPR012340">
    <property type="entry name" value="NA-bd_OB-fold"/>
</dbReference>
<dbReference type="InterPro" id="IPR000085">
    <property type="entry name" value="RuvA"/>
</dbReference>
<dbReference type="InterPro" id="IPR010994">
    <property type="entry name" value="RuvA_2-like"/>
</dbReference>
<dbReference type="InterPro" id="IPR011114">
    <property type="entry name" value="RuvA_C"/>
</dbReference>
<dbReference type="InterPro" id="IPR036267">
    <property type="entry name" value="RuvA_C_sf"/>
</dbReference>
<dbReference type="NCBIfam" id="TIGR00084">
    <property type="entry name" value="ruvA"/>
    <property type="match status" value="1"/>
</dbReference>
<dbReference type="Pfam" id="PF14520">
    <property type="entry name" value="HHH_5"/>
    <property type="match status" value="1"/>
</dbReference>
<dbReference type="Pfam" id="PF07499">
    <property type="entry name" value="RuvA_C"/>
    <property type="match status" value="1"/>
</dbReference>
<dbReference type="Pfam" id="PF01330">
    <property type="entry name" value="RuvA_N"/>
    <property type="match status" value="1"/>
</dbReference>
<dbReference type="SMART" id="SM00278">
    <property type="entry name" value="HhH1"/>
    <property type="match status" value="2"/>
</dbReference>
<dbReference type="SUPFAM" id="SSF46929">
    <property type="entry name" value="DNA helicase RuvA subunit, C-terminal domain"/>
    <property type="match status" value="1"/>
</dbReference>
<dbReference type="SUPFAM" id="SSF50249">
    <property type="entry name" value="Nucleic acid-binding proteins"/>
    <property type="match status" value="1"/>
</dbReference>
<dbReference type="SUPFAM" id="SSF47781">
    <property type="entry name" value="RuvA domain 2-like"/>
    <property type="match status" value="1"/>
</dbReference>
<reference key="1">
    <citation type="journal article" date="2011" name="Stand. Genomic Sci.">
        <title>Complete genome sequence of the filamentous gliding predatory bacterium Herpetosiphon aurantiacus type strain (114-95(T)).</title>
        <authorList>
            <person name="Kiss H."/>
            <person name="Nett M."/>
            <person name="Domin N."/>
            <person name="Martin K."/>
            <person name="Maresca J.A."/>
            <person name="Copeland A."/>
            <person name="Lapidus A."/>
            <person name="Lucas S."/>
            <person name="Berry K.W."/>
            <person name="Glavina Del Rio T."/>
            <person name="Dalin E."/>
            <person name="Tice H."/>
            <person name="Pitluck S."/>
            <person name="Richardson P."/>
            <person name="Bruce D."/>
            <person name="Goodwin L."/>
            <person name="Han C."/>
            <person name="Detter J.C."/>
            <person name="Schmutz J."/>
            <person name="Brettin T."/>
            <person name="Land M."/>
            <person name="Hauser L."/>
            <person name="Kyrpides N.C."/>
            <person name="Ivanova N."/>
            <person name="Goeker M."/>
            <person name="Woyke T."/>
            <person name="Klenk H.P."/>
            <person name="Bryant D.A."/>
        </authorList>
    </citation>
    <scope>NUCLEOTIDE SEQUENCE [LARGE SCALE GENOMIC DNA]</scope>
    <source>
        <strain>ATCC 23779 / DSM 785 / 114-95</strain>
    </source>
</reference>
<evidence type="ECO:0000255" key="1">
    <source>
        <dbReference type="HAMAP-Rule" id="MF_00031"/>
    </source>
</evidence>
<organism>
    <name type="scientific">Herpetosiphon aurantiacus (strain ATCC 23779 / DSM 785 / 114-95)</name>
    <dbReference type="NCBI Taxonomy" id="316274"/>
    <lineage>
        <taxon>Bacteria</taxon>
        <taxon>Bacillati</taxon>
        <taxon>Chloroflexota</taxon>
        <taxon>Chloroflexia</taxon>
        <taxon>Herpetosiphonales</taxon>
        <taxon>Herpetosiphonaceae</taxon>
        <taxon>Herpetosiphon</taxon>
    </lineage>
</organism>